<protein>
    <recommendedName>
        <fullName evidence="11">Bifunctional chorismate mutase/prephenate dehydratase</fullName>
    </recommendedName>
    <alternativeName>
        <fullName evidence="9">Chorismate mutase-prephenate dehydratase</fullName>
    </alternativeName>
    <alternativeName>
        <fullName evidence="10">P-protein</fullName>
    </alternativeName>
    <domain>
        <recommendedName>
            <fullName evidence="9">Chorismate mutase</fullName>
            <shortName evidence="11">CM</shortName>
            <ecNumber evidence="5">5.4.99.5</ecNumber>
        </recommendedName>
    </domain>
    <domain>
        <recommendedName>
            <fullName evidence="9">Prephenate dehydratase</fullName>
            <shortName evidence="11">PDT</shortName>
            <ecNumber evidence="5">4.2.1.51</ecNumber>
        </recommendedName>
    </domain>
</protein>
<sequence>MTSENPLLALREKISALDEKLLALLAERRELAVEVGKAKLLSHRPVRDIDRERDLLERLITLGKAHHLDAHYITRLFQLIIEDSVLTQQALLQQHLNKINPHSARIAFLGPKGSYSHLAARQYAARHFEQFIESGCAKFADIFNQVETGQADYAVVPIENTSSGAINDVYDLLQHTSLSIVGEMTLTIDHCLLVSGTTDLSTINTVYSHPQPFQQCSKFLNRYPHWKIEYTESTSAAMEKVAQAKSPHVAALGSEAGGTLYGLQVLERIEANQRQNFTRFVVLARKAINVSDQVPAKTTLLMATGQQAGALVEALLVLRNHNLIMTRLESRPIHGNPWEEMFYLDIQANLESAEMQKALKELGEITRSMKVLGCYPSENVVPVDPT</sequence>
<dbReference type="EC" id="5.4.99.5" evidence="5"/>
<dbReference type="EC" id="4.2.1.51" evidence="5"/>
<dbReference type="EMBL" id="M10431">
    <property type="protein sequence ID" value="AAA24330.1"/>
    <property type="molecule type" value="Genomic_DNA"/>
</dbReference>
<dbReference type="EMBL" id="U00096">
    <property type="protein sequence ID" value="AAC75648.1"/>
    <property type="molecule type" value="Genomic_DNA"/>
</dbReference>
<dbReference type="EMBL" id="AP009048">
    <property type="protein sequence ID" value="BAA16484.1"/>
    <property type="molecule type" value="Genomic_DNA"/>
</dbReference>
<dbReference type="EMBL" id="M58024">
    <property type="protein sequence ID" value="AAA62784.1"/>
    <property type="molecule type" value="Genomic_DNA"/>
</dbReference>
<dbReference type="EMBL" id="V00314">
    <property type="protein sequence ID" value="CAA23601.1"/>
    <property type="molecule type" value="Genomic_DNA"/>
</dbReference>
<dbReference type="PIR" id="A30261">
    <property type="entry name" value="KMECPW"/>
</dbReference>
<dbReference type="RefSeq" id="NP_417090.1">
    <property type="nucleotide sequence ID" value="NC_000913.3"/>
</dbReference>
<dbReference type="RefSeq" id="WP_000200120.1">
    <property type="nucleotide sequence ID" value="NZ_SSUR01000056.1"/>
</dbReference>
<dbReference type="PDB" id="1ECM">
    <property type="method" value="X-ray"/>
    <property type="resolution" value="2.20 A"/>
    <property type="chains" value="A/B=1-109"/>
</dbReference>
<dbReference type="PDB" id="5VHT">
    <property type="method" value="X-ray"/>
    <property type="resolution" value="2.00 A"/>
    <property type="chains" value="A/B=1-92"/>
</dbReference>
<dbReference type="PDBsum" id="1ECM"/>
<dbReference type="PDBsum" id="5VHT"/>
<dbReference type="SMR" id="P0A9J8"/>
<dbReference type="BioGRID" id="4263461">
    <property type="interactions" value="36"/>
</dbReference>
<dbReference type="DIP" id="DIP-36017N"/>
<dbReference type="FunCoup" id="P0A9J8">
    <property type="interactions" value="684"/>
</dbReference>
<dbReference type="IntAct" id="P0A9J8">
    <property type="interactions" value="17"/>
</dbReference>
<dbReference type="STRING" id="511145.b2599"/>
<dbReference type="BindingDB" id="P0A9J8"/>
<dbReference type="ChEMBL" id="CHEMBL3341586"/>
<dbReference type="DrugBank" id="DB08648">
    <property type="generic name" value="8-Hydroxy-2-oxa-bicyclo[3.3.1]non-6-ene-3,5-dicarboxylic acid"/>
</dbReference>
<dbReference type="jPOST" id="P0A9J8"/>
<dbReference type="PaxDb" id="511145-b2599"/>
<dbReference type="EnsemblBacteria" id="AAC75648">
    <property type="protein sequence ID" value="AAC75648"/>
    <property type="gene ID" value="b2599"/>
</dbReference>
<dbReference type="GeneID" id="947081"/>
<dbReference type="KEGG" id="ecj:JW2580"/>
<dbReference type="KEGG" id="eco:b2599"/>
<dbReference type="KEGG" id="ecoc:C3026_14395"/>
<dbReference type="PATRIC" id="fig|1411691.4.peg.4140"/>
<dbReference type="EchoBASE" id="EB0701"/>
<dbReference type="eggNOG" id="COG0077">
    <property type="taxonomic scope" value="Bacteria"/>
</dbReference>
<dbReference type="eggNOG" id="COG1605">
    <property type="taxonomic scope" value="Bacteria"/>
</dbReference>
<dbReference type="HOGENOM" id="CLU_035008_1_0_6"/>
<dbReference type="InParanoid" id="P0A9J8"/>
<dbReference type="OMA" id="PLMIYRE"/>
<dbReference type="OrthoDB" id="9802281at2"/>
<dbReference type="PhylomeDB" id="P0A9J8"/>
<dbReference type="BioCyc" id="EcoCyc:CHORISMUTPREPHENDEHYDRAT-MONOMER"/>
<dbReference type="BioCyc" id="MetaCyc:CHORISMUTPREPHENDEHYDRAT-MONOMER"/>
<dbReference type="BRENDA" id="5.4.99.5">
    <property type="organism ID" value="2026"/>
</dbReference>
<dbReference type="SABIO-RK" id="P0A9J8"/>
<dbReference type="UniPathway" id="UPA00120">
    <property type="reaction ID" value="UER00203"/>
</dbReference>
<dbReference type="UniPathway" id="UPA00121">
    <property type="reaction ID" value="UER00345"/>
</dbReference>
<dbReference type="EvolutionaryTrace" id="P0A9J8"/>
<dbReference type="PRO" id="PR:P0A9J8"/>
<dbReference type="Proteomes" id="UP000000625">
    <property type="component" value="Chromosome"/>
</dbReference>
<dbReference type="GO" id="GO:0005737">
    <property type="term" value="C:cytoplasm"/>
    <property type="evidence" value="ECO:0000318"/>
    <property type="project" value="GO_Central"/>
</dbReference>
<dbReference type="GO" id="GO:0004106">
    <property type="term" value="F:chorismate mutase activity"/>
    <property type="evidence" value="ECO:0000314"/>
    <property type="project" value="EcoCyc"/>
</dbReference>
<dbReference type="GO" id="GO:0004664">
    <property type="term" value="F:prephenate dehydratase activity"/>
    <property type="evidence" value="ECO:0000314"/>
    <property type="project" value="EcoCyc"/>
</dbReference>
<dbReference type="GO" id="GO:0042803">
    <property type="term" value="F:protein homodimerization activity"/>
    <property type="evidence" value="ECO:0000314"/>
    <property type="project" value="EcoCyc"/>
</dbReference>
<dbReference type="GO" id="GO:0046417">
    <property type="term" value="P:chorismate metabolic process"/>
    <property type="evidence" value="ECO:0007669"/>
    <property type="project" value="InterPro"/>
</dbReference>
<dbReference type="GO" id="GO:0009094">
    <property type="term" value="P:L-phenylalanine biosynthetic process"/>
    <property type="evidence" value="ECO:0000315"/>
    <property type="project" value="EcoCyc"/>
</dbReference>
<dbReference type="GO" id="GO:0006571">
    <property type="term" value="P:tyrosine biosynthetic process"/>
    <property type="evidence" value="ECO:0000315"/>
    <property type="project" value="EcoCyc"/>
</dbReference>
<dbReference type="CDD" id="cd04905">
    <property type="entry name" value="ACT_CM-PDT"/>
    <property type="match status" value="1"/>
</dbReference>
<dbReference type="CDD" id="cd13631">
    <property type="entry name" value="PBP2_Ct-PDT_like"/>
    <property type="match status" value="1"/>
</dbReference>
<dbReference type="FunFam" id="1.20.59.10:FF:000002">
    <property type="entry name" value="Chorismate mutase/prephenate dehydratase"/>
    <property type="match status" value="1"/>
</dbReference>
<dbReference type="FunFam" id="3.30.70.260:FF:000022">
    <property type="entry name" value="Chorismate mutase/prephenate dehydratase"/>
    <property type="match status" value="1"/>
</dbReference>
<dbReference type="FunFam" id="3.40.190.10:FF:000034">
    <property type="entry name" value="Chorismate mutase/prephenate dehydratase"/>
    <property type="match status" value="1"/>
</dbReference>
<dbReference type="FunFam" id="3.40.190.10:FF:000044">
    <property type="entry name" value="Chorismate mutase/prephenate dehydratase"/>
    <property type="match status" value="1"/>
</dbReference>
<dbReference type="Gene3D" id="3.30.70.260">
    <property type="match status" value="1"/>
</dbReference>
<dbReference type="Gene3D" id="1.20.59.10">
    <property type="entry name" value="Chorismate mutase"/>
    <property type="match status" value="1"/>
</dbReference>
<dbReference type="Gene3D" id="3.40.190.10">
    <property type="entry name" value="Periplasmic binding protein-like II"/>
    <property type="match status" value="2"/>
</dbReference>
<dbReference type="InterPro" id="IPR045865">
    <property type="entry name" value="ACT-like_dom_sf"/>
</dbReference>
<dbReference type="InterPro" id="IPR002912">
    <property type="entry name" value="ACT_dom"/>
</dbReference>
<dbReference type="InterPro" id="IPR008242">
    <property type="entry name" value="Chor_mutase/pphenate_deHydtase"/>
</dbReference>
<dbReference type="InterPro" id="IPR036263">
    <property type="entry name" value="Chorismate_II_sf"/>
</dbReference>
<dbReference type="InterPro" id="IPR036979">
    <property type="entry name" value="CM_dom_sf"/>
</dbReference>
<dbReference type="InterPro" id="IPR002701">
    <property type="entry name" value="CM_II_prokaryot"/>
</dbReference>
<dbReference type="InterPro" id="IPR010952">
    <property type="entry name" value="CM_P_1"/>
</dbReference>
<dbReference type="InterPro" id="IPR001086">
    <property type="entry name" value="Preph_deHydtase"/>
</dbReference>
<dbReference type="InterPro" id="IPR018528">
    <property type="entry name" value="Preph_deHydtase_CS"/>
</dbReference>
<dbReference type="NCBIfam" id="TIGR01797">
    <property type="entry name" value="CM_P_1"/>
    <property type="match status" value="1"/>
</dbReference>
<dbReference type="NCBIfam" id="NF007910">
    <property type="entry name" value="PRK10622.1"/>
    <property type="match status" value="1"/>
</dbReference>
<dbReference type="NCBIfam" id="NF008865">
    <property type="entry name" value="PRK11898.1"/>
    <property type="match status" value="1"/>
</dbReference>
<dbReference type="PANTHER" id="PTHR21022">
    <property type="entry name" value="PREPHENATE DEHYDRATASE P PROTEIN"/>
    <property type="match status" value="1"/>
</dbReference>
<dbReference type="PANTHER" id="PTHR21022:SF19">
    <property type="entry name" value="PREPHENATE DEHYDRATASE-RELATED"/>
    <property type="match status" value="1"/>
</dbReference>
<dbReference type="Pfam" id="PF01817">
    <property type="entry name" value="CM_2"/>
    <property type="match status" value="1"/>
</dbReference>
<dbReference type="Pfam" id="PF00800">
    <property type="entry name" value="PDT"/>
    <property type="match status" value="1"/>
</dbReference>
<dbReference type="PIRSF" id="PIRSF001500">
    <property type="entry name" value="Chor_mut_pdt_Ppr"/>
    <property type="match status" value="1"/>
</dbReference>
<dbReference type="SMART" id="SM00830">
    <property type="entry name" value="CM_2"/>
    <property type="match status" value="1"/>
</dbReference>
<dbReference type="SUPFAM" id="SSF55021">
    <property type="entry name" value="ACT-like"/>
    <property type="match status" value="1"/>
</dbReference>
<dbReference type="SUPFAM" id="SSF48600">
    <property type="entry name" value="Chorismate mutase II"/>
    <property type="match status" value="1"/>
</dbReference>
<dbReference type="SUPFAM" id="SSF53850">
    <property type="entry name" value="Periplasmic binding protein-like II"/>
    <property type="match status" value="1"/>
</dbReference>
<dbReference type="PROSITE" id="PS51671">
    <property type="entry name" value="ACT"/>
    <property type="match status" value="1"/>
</dbReference>
<dbReference type="PROSITE" id="PS51168">
    <property type="entry name" value="CHORISMATE_MUT_2"/>
    <property type="match status" value="1"/>
</dbReference>
<dbReference type="PROSITE" id="PS00857">
    <property type="entry name" value="PREPHENATE_DEHYDR_1"/>
    <property type="match status" value="1"/>
</dbReference>
<dbReference type="PROSITE" id="PS00858">
    <property type="entry name" value="PREPHENATE_DEHYDR_2"/>
    <property type="match status" value="1"/>
</dbReference>
<dbReference type="PROSITE" id="PS51171">
    <property type="entry name" value="PREPHENATE_DEHYDR_3"/>
    <property type="match status" value="1"/>
</dbReference>
<proteinExistence type="evidence at protein level"/>
<keyword id="KW-0002">3D-structure</keyword>
<keyword id="KW-0028">Amino-acid biosynthesis</keyword>
<keyword id="KW-0057">Aromatic amino acid biosynthesis</keyword>
<keyword id="KW-0963">Cytoplasm</keyword>
<keyword id="KW-0413">Isomerase</keyword>
<keyword id="KW-0456">Lyase</keyword>
<keyword id="KW-0511">Multifunctional enzyme</keyword>
<keyword id="KW-0584">Phenylalanine biosynthesis</keyword>
<keyword id="KW-1185">Reference proteome</keyword>
<feature type="chain" id="PRO_0000119185" description="Bifunctional chorismate mutase/prephenate dehydratase">
    <location>
        <begin position="1"/>
        <end position="386"/>
    </location>
</feature>
<feature type="domain" description="Chorismate mutase" evidence="2">
    <location>
        <begin position="1"/>
        <end position="92"/>
    </location>
</feature>
<feature type="domain" description="Prephenate dehydratase" evidence="3">
    <location>
        <begin position="105"/>
        <end position="285"/>
    </location>
</feature>
<feature type="domain" description="ACT" evidence="4">
    <location>
        <begin position="299"/>
        <end position="376"/>
    </location>
</feature>
<feature type="region of interest" description="Regulatory (Phe-binding)" evidence="12">
    <location>
        <begin position="286"/>
        <end position="386"/>
    </location>
</feature>
<feature type="binding site" evidence="13">
    <location>
        <position position="11"/>
    </location>
    <ligand>
        <name>substrate</name>
    </ligand>
</feature>
<feature type="binding site" evidence="13">
    <location>
        <position position="28"/>
    </location>
    <ligand>
        <name>substrate</name>
    </ligand>
</feature>
<feature type="binding site" evidence="13">
    <location>
        <position position="39"/>
    </location>
    <ligand>
        <name>substrate</name>
    </ligand>
</feature>
<feature type="binding site" evidence="13">
    <location>
        <position position="48"/>
    </location>
    <ligand>
        <name>substrate</name>
    </ligand>
</feature>
<feature type="binding site" evidence="13">
    <location>
        <position position="52"/>
    </location>
    <ligand>
        <name>substrate</name>
    </ligand>
</feature>
<feature type="binding site" evidence="13">
    <location>
        <position position="84"/>
    </location>
    <ligand>
        <name>substrate</name>
    </ligand>
</feature>
<feature type="binding site" evidence="13">
    <location>
        <position position="88"/>
    </location>
    <ligand>
        <name>substrate</name>
    </ligand>
</feature>
<feature type="site" description="Essential for prephenate dehydratase activity" evidence="1">
    <location>
        <position position="278"/>
    </location>
</feature>
<feature type="mutagenesis site" description="Important decrease in catalytic efficiency and affinity." evidence="7">
    <original>R</original>
    <variation>A</variation>
    <variation>K</variation>
    <location>
        <position position="11"/>
    </location>
</feature>
<feature type="mutagenesis site" description="Important decrease in catalytic efficiency and affinity." evidence="7">
    <original>R</original>
    <variation>A</variation>
    <variation>K</variation>
    <location>
        <position position="28"/>
    </location>
</feature>
<feature type="mutagenesis site" description="Important decrease in catalytic efficiency and affinity." evidence="7">
    <original>K</original>
    <variation>A</variation>
    <variation>Q</variation>
    <variation>R</variation>
    <location>
        <position position="39"/>
    </location>
</feature>
<feature type="mutagenesis site" description="Important decrease in catalytic efficiency and affinity." evidence="7">
    <original>E</original>
    <variation>A</variation>
    <variation>D</variation>
    <variation>Q</variation>
    <location>
        <position position="52"/>
    </location>
</feature>
<feature type="mutagenesis site" description="Important decrease in catalytic efficiency and affinity." evidence="7">
    <original>Q</original>
    <variation>A</variation>
    <variation>E</variation>
    <variation>K</variation>
    <location>
        <position position="88"/>
    </location>
</feature>
<feature type="helix" evidence="15">
    <location>
        <begin position="6"/>
        <end position="42"/>
    </location>
</feature>
<feature type="helix" evidence="15">
    <location>
        <begin position="49"/>
        <end position="65"/>
    </location>
</feature>
<feature type="helix" evidence="15">
    <location>
        <begin position="70"/>
        <end position="92"/>
    </location>
</feature>
<feature type="helix" evidence="14">
    <location>
        <begin position="96"/>
        <end position="99"/>
    </location>
</feature>
<gene>
    <name evidence="8" type="primary">pheA</name>
    <name type="ordered locus">b2599</name>
    <name type="ordered locus">JW2580</name>
</gene>
<organism>
    <name type="scientific">Escherichia coli (strain K12)</name>
    <dbReference type="NCBI Taxonomy" id="83333"/>
    <lineage>
        <taxon>Bacteria</taxon>
        <taxon>Pseudomonadati</taxon>
        <taxon>Pseudomonadota</taxon>
        <taxon>Gammaproteobacteria</taxon>
        <taxon>Enterobacterales</taxon>
        <taxon>Enterobacteriaceae</taxon>
        <taxon>Escherichia</taxon>
    </lineage>
</organism>
<name>CMPDT_ECOLI</name>
<reference key="1">
    <citation type="journal article" date="1984" name="J. Mol. Biol.">
        <title>Nucleotide sequence and transcription of the phenylalanine and tyrosine operons of Escherichia coli K12.</title>
        <authorList>
            <person name="Hudson G.S."/>
            <person name="Davidson B.E."/>
        </authorList>
    </citation>
    <scope>NUCLEOTIDE SEQUENCE [GENOMIC DNA]</scope>
    <source>
        <strain>K12</strain>
    </source>
</reference>
<reference key="2">
    <citation type="journal article" date="1997" name="DNA Res.">
        <title>Construction of a contiguous 874-kb sequence of the Escherichia coli-K12 genome corresponding to 50.0-68.8 min on the linkage map and analysis of its sequence features.</title>
        <authorList>
            <person name="Yamamoto Y."/>
            <person name="Aiba H."/>
            <person name="Baba T."/>
            <person name="Hayashi K."/>
            <person name="Inada T."/>
            <person name="Isono K."/>
            <person name="Itoh T."/>
            <person name="Kimura S."/>
            <person name="Kitagawa M."/>
            <person name="Makino K."/>
            <person name="Miki T."/>
            <person name="Mitsuhashi N."/>
            <person name="Mizobuchi K."/>
            <person name="Mori H."/>
            <person name="Nakade S."/>
            <person name="Nakamura Y."/>
            <person name="Nashimoto H."/>
            <person name="Oshima T."/>
            <person name="Oyama S."/>
            <person name="Saito N."/>
            <person name="Sampei G."/>
            <person name="Satoh Y."/>
            <person name="Sivasundaram S."/>
            <person name="Tagami H."/>
            <person name="Takahashi H."/>
            <person name="Takeda J."/>
            <person name="Takemoto K."/>
            <person name="Uehara K."/>
            <person name="Wada C."/>
            <person name="Yamagata S."/>
            <person name="Horiuchi T."/>
        </authorList>
    </citation>
    <scope>NUCLEOTIDE SEQUENCE [LARGE SCALE GENOMIC DNA]</scope>
    <source>
        <strain>K12 / W3110 / ATCC 27325 / DSM 5911</strain>
    </source>
</reference>
<reference key="3">
    <citation type="journal article" date="1997" name="Science">
        <title>The complete genome sequence of Escherichia coli K-12.</title>
        <authorList>
            <person name="Blattner F.R."/>
            <person name="Plunkett G. III"/>
            <person name="Bloch C.A."/>
            <person name="Perna N.T."/>
            <person name="Burland V."/>
            <person name="Riley M."/>
            <person name="Collado-Vides J."/>
            <person name="Glasner J.D."/>
            <person name="Rode C.K."/>
            <person name="Mayhew G.F."/>
            <person name="Gregor J."/>
            <person name="Davis N.W."/>
            <person name="Kirkpatrick H.A."/>
            <person name="Goeden M.A."/>
            <person name="Rose D.J."/>
            <person name="Mau B."/>
            <person name="Shao Y."/>
        </authorList>
    </citation>
    <scope>NUCLEOTIDE SEQUENCE [LARGE SCALE GENOMIC DNA]</scope>
    <source>
        <strain>K12 / MG1655 / ATCC 47076</strain>
    </source>
</reference>
<reference key="4">
    <citation type="journal article" date="2006" name="Mol. Syst. Biol.">
        <title>Highly accurate genome sequences of Escherichia coli K-12 strains MG1655 and W3110.</title>
        <authorList>
            <person name="Hayashi K."/>
            <person name="Morooka N."/>
            <person name="Yamamoto Y."/>
            <person name="Fujita K."/>
            <person name="Isono K."/>
            <person name="Choi S."/>
            <person name="Ohtsubo E."/>
            <person name="Baba T."/>
            <person name="Wanner B.L."/>
            <person name="Mori H."/>
            <person name="Horiuchi T."/>
        </authorList>
    </citation>
    <scope>NUCLEOTIDE SEQUENCE [LARGE SCALE GENOMIC DNA]</scope>
    <source>
        <strain>K12 / W3110 / ATCC 27325 / DSM 5911</strain>
    </source>
</reference>
<reference key="5">
    <citation type="journal article" date="1990" name="J. Biol. Chem.">
        <title>pheAo mutants of Escherichia coli have a defective pheA attenuator.</title>
        <authorList>
            <person name="Gavini N."/>
            <person name="Davidson B.E."/>
        </authorList>
    </citation>
    <scope>NUCLEOTIDE SEQUENCE [GENOMIC DNA] OF 1-50</scope>
</reference>
<reference key="6">
    <citation type="journal article" date="1978" name="Proc. Natl. Acad. Sci. U.S.A.">
        <title>Nucleotide sequence of the leader region of the phenylalanine operon of Escherichia coli.</title>
        <authorList>
            <person name="Zurawski G.R."/>
            <person name="Brown K."/>
            <person name="Killingly D."/>
            <person name="Yanofsky C."/>
        </authorList>
    </citation>
    <scope>NUCLEOTIDE SEQUENCE [GENOMIC DNA] OF 1-9</scope>
</reference>
<reference key="7">
    <citation type="journal article" date="1972" name="J. Biol. Chem.">
        <title>Chorismate mutase-prephenate dehydratase from Escherichia coli K-12. II. Kinetic properties.</title>
        <authorList>
            <person name="Dopheide T.A."/>
            <person name="Crewther P."/>
            <person name="Davidson B.E."/>
        </authorList>
    </citation>
    <scope>FUNCTION AS A CHORISMATE MUTASE AND PREPHENATE DEHYDRATASE</scope>
    <scope>CATALYTIC ACTIVITY</scope>
    <scope>BIOPHYSICOCHEMICAL PROPERTIES</scope>
    <scope>ACTIVITY REGULATION</scope>
</reference>
<reference key="8">
    <citation type="journal article" date="1996" name="J. Am. Chem. Soc.">
        <title>Analysis of active site residues in Escherichia coli chorismate mutase by site-directed mutagenesis.</title>
        <authorList>
            <person name="Liu D.R."/>
            <person name="Cload S.T."/>
            <person name="Pastor R.M."/>
            <person name="Schultz P.G."/>
        </authorList>
    </citation>
    <scope>MUTAGENESIS OF ARG-11; ARG-28; LYS-39; GLU-52 AND GLN-88</scope>
    <scope>BIOPHYSICOCHEMICAL PROPERTIES</scope>
</reference>
<reference key="9">
    <citation type="journal article" date="1998" name="J. Biol. Chem.">
        <title>Chorismate mutase-prephenate dehydratase from Escherichia coli. Study of catalytic and regulatory domains using genetically engineered proteins.</title>
        <authorList>
            <person name="Zhang S."/>
            <person name="Pohnert G."/>
            <person name="Kongsaeree P."/>
            <person name="Wilson D.B."/>
            <person name="Clardy J."/>
            <person name="Ganem B."/>
        </authorList>
    </citation>
    <scope>DOMAIN</scope>
</reference>
<reference key="10">
    <citation type="journal article" date="1995" name="J. Am. Chem. Soc.">
        <title>Atomic structure of the buried catalytic pocket of Escherichia coli chorismate mutase.</title>
        <authorList>
            <person name="Lee A.Y."/>
            <person name="Karplus P.A."/>
            <person name="Ganem B."/>
            <person name="Clardy J."/>
        </authorList>
    </citation>
    <scope>X-RAY CRYSTALLOGRAPHY (2.2 ANGSTROMS) OF 1-109 IN COMPLEX WITH SUBSTRATE ANALOGS</scope>
    <scope>SUBUNIT</scope>
</reference>
<comment type="function">
    <text evidence="5">Catalyzes the Claisen rearrangement of chorismate to prephenate and the decarboxylation/dehydration of prephenate to phenylpyruvate.</text>
</comment>
<comment type="catalytic activity">
    <reaction evidence="5">
        <text>chorismate = prephenate</text>
        <dbReference type="Rhea" id="RHEA:13897"/>
        <dbReference type="ChEBI" id="CHEBI:29748"/>
        <dbReference type="ChEBI" id="CHEBI:29934"/>
        <dbReference type="EC" id="5.4.99.5"/>
    </reaction>
</comment>
<comment type="catalytic activity">
    <reaction evidence="5">
        <text>prephenate + H(+) = 3-phenylpyruvate + CO2 + H2O</text>
        <dbReference type="Rhea" id="RHEA:21648"/>
        <dbReference type="ChEBI" id="CHEBI:15377"/>
        <dbReference type="ChEBI" id="CHEBI:15378"/>
        <dbReference type="ChEBI" id="CHEBI:16526"/>
        <dbReference type="ChEBI" id="CHEBI:18005"/>
        <dbReference type="ChEBI" id="CHEBI:29934"/>
        <dbReference type="EC" id="4.2.1.51"/>
    </reaction>
</comment>
<comment type="activity regulation">
    <text evidence="5">Both activities are inhibited by L-phenylalanine.</text>
</comment>
<comment type="biophysicochemical properties">
    <kinetics>
        <KM evidence="5">45 uM for chorismate (at pH 7.8 and at 37 degrees Celsius)</KM>
        <KM evidence="5">1 mM for prephenate (at pH 7.8 and at 37 degrees Celsius)</KM>
        <KM evidence="7">147 uM for chorismate (at pH 4.9)</KM>
        <KM evidence="7">296 uM for chorismate (at pH 7.5)</KM>
        <text evidence="7">kcat is 72 sec(-1) at pH 7.5. kcat is 31 sec(-1) at pH 4.9.</text>
    </kinetics>
    <phDependence>
        <text evidence="5">Optimum pH is 7.3 for chorismate mutase activity.</text>
    </phDependence>
</comment>
<comment type="pathway">
    <text evidence="11">Amino-acid biosynthesis; L-phenylalanine biosynthesis; phenylpyruvate from prephenate: step 1/1.</text>
</comment>
<comment type="pathway">
    <text evidence="11">Metabolic intermediate biosynthesis; prephenate biosynthesis; prephenate from chorismate: step 1/1.</text>
</comment>
<comment type="subunit">
    <text evidence="6">Homodimer.</text>
</comment>
<comment type="subcellular location">
    <subcellularLocation>
        <location evidence="11">Cytoplasm</location>
    </subcellularLocation>
</comment>
<evidence type="ECO:0000255" key="1"/>
<evidence type="ECO:0000255" key="2">
    <source>
        <dbReference type="PROSITE-ProRule" id="PRU00515"/>
    </source>
</evidence>
<evidence type="ECO:0000255" key="3">
    <source>
        <dbReference type="PROSITE-ProRule" id="PRU00517"/>
    </source>
</evidence>
<evidence type="ECO:0000255" key="4">
    <source>
        <dbReference type="PROSITE-ProRule" id="PRU01007"/>
    </source>
</evidence>
<evidence type="ECO:0000269" key="5">
    <source>
    </source>
</evidence>
<evidence type="ECO:0000269" key="6">
    <source ref="10"/>
</evidence>
<evidence type="ECO:0000269" key="7">
    <source ref="8"/>
</evidence>
<evidence type="ECO:0000303" key="8">
    <source>
    </source>
</evidence>
<evidence type="ECO:0000303" key="9">
    <source>
    </source>
</evidence>
<evidence type="ECO:0000303" key="10">
    <source ref="10"/>
</evidence>
<evidence type="ECO:0000305" key="11"/>
<evidence type="ECO:0000305" key="12">
    <source>
    </source>
</evidence>
<evidence type="ECO:0000305" key="13">
    <source ref="10"/>
</evidence>
<evidence type="ECO:0007829" key="14">
    <source>
        <dbReference type="PDB" id="1ECM"/>
    </source>
</evidence>
<evidence type="ECO:0007829" key="15">
    <source>
        <dbReference type="PDB" id="5VHT"/>
    </source>
</evidence>
<accession>P0A9J8</accession>
<accession>P07022</accession>
<accession>P78204</accession>